<sequence length="396" mass="42420">MTINPVSRKVAWLRVVTLAIAAFIFNTTEFVPVGLLSDIAESFHMQTAQVGIMLTIYAWVVAVMSLPFMLLTSQMERRKLLICLFVLFIASHVLSFLAWNFTVLVISRIGIAFAHAIFWSITASLAIRLAPAGKRAQALSLIATGTALAMVLGLPIGRVVGQYFGWRTTFFAIGMGALITLLCLIKLLPKLPSEHSGSLKSLPLLFRRPALMSLYVLTVVVVTAHYTAYSYIEPFVQNVAGLSANFATVLLLILGGAGIIGSLVFGKLGNRHASSLVSIAIALLVICLLLLLPAANSEAHLAILSIFWGIAIMVIGLGMQVKVLALAPDATDVAMALFSGIFNIGIGAGALVGNQVSLHWSMSAIGYIGAIPACAALVWAVLIFRKWPVTLEEQPH</sequence>
<keyword id="KW-0997">Cell inner membrane</keyword>
<keyword id="KW-1003">Cell membrane</keyword>
<keyword id="KW-0472">Membrane</keyword>
<keyword id="KW-0762">Sugar transport</keyword>
<keyword id="KW-0812">Transmembrane</keyword>
<keyword id="KW-1133">Transmembrane helix</keyword>
<keyword id="KW-0813">Transport</keyword>
<feature type="chain" id="PRO_1000127476" description="Probable sugar efflux transporter">
    <location>
        <begin position="1"/>
        <end position="396"/>
    </location>
</feature>
<feature type="transmembrane region" description="Helical" evidence="1">
    <location>
        <begin position="15"/>
        <end position="35"/>
    </location>
</feature>
<feature type="transmembrane region" description="Helical" evidence="1">
    <location>
        <begin position="50"/>
        <end position="70"/>
    </location>
</feature>
<feature type="transmembrane region" description="Helical" evidence="1">
    <location>
        <begin position="81"/>
        <end position="101"/>
    </location>
</feature>
<feature type="transmembrane region" description="Helical" evidence="1">
    <location>
        <begin position="103"/>
        <end position="123"/>
    </location>
</feature>
<feature type="transmembrane region" description="Helical" evidence="1">
    <location>
        <begin position="136"/>
        <end position="156"/>
    </location>
</feature>
<feature type="transmembrane region" description="Helical" evidence="1">
    <location>
        <begin position="169"/>
        <end position="189"/>
    </location>
</feature>
<feature type="transmembrane region" description="Helical" evidence="1">
    <location>
        <begin position="209"/>
        <end position="229"/>
    </location>
</feature>
<feature type="transmembrane region" description="Helical" evidence="1">
    <location>
        <begin position="246"/>
        <end position="266"/>
    </location>
</feature>
<feature type="transmembrane region" description="Helical" evidence="1">
    <location>
        <begin position="275"/>
        <end position="295"/>
    </location>
</feature>
<feature type="transmembrane region" description="Helical" evidence="1">
    <location>
        <begin position="301"/>
        <end position="321"/>
    </location>
</feature>
<feature type="transmembrane region" description="Helical" evidence="1">
    <location>
        <begin position="333"/>
        <end position="353"/>
    </location>
</feature>
<feature type="transmembrane region" description="Helical" evidence="1">
    <location>
        <begin position="364"/>
        <end position="384"/>
    </location>
</feature>
<proteinExistence type="inferred from homology"/>
<protein>
    <recommendedName>
        <fullName evidence="1">Probable sugar efflux transporter</fullName>
    </recommendedName>
</protein>
<name>SOTB_SALSV</name>
<comment type="function">
    <text evidence="1">Involved in the efflux of sugars. The physiological role may be the reduction of the intracellular concentration of toxic sugars or sugar metabolites.</text>
</comment>
<comment type="subcellular location">
    <subcellularLocation>
        <location evidence="1">Cell inner membrane</location>
        <topology evidence="1">Multi-pass membrane protein</topology>
    </subcellularLocation>
</comment>
<comment type="similarity">
    <text evidence="1">Belongs to the major facilitator superfamily. SotB (TC 2.A.1.2) family.</text>
</comment>
<gene>
    <name evidence="1" type="primary">sotB</name>
    <name type="ordered locus">SeSA_A1627</name>
</gene>
<organism>
    <name type="scientific">Salmonella schwarzengrund (strain CVM19633)</name>
    <dbReference type="NCBI Taxonomy" id="439843"/>
    <lineage>
        <taxon>Bacteria</taxon>
        <taxon>Pseudomonadati</taxon>
        <taxon>Pseudomonadota</taxon>
        <taxon>Gammaproteobacteria</taxon>
        <taxon>Enterobacterales</taxon>
        <taxon>Enterobacteriaceae</taxon>
        <taxon>Salmonella</taxon>
    </lineage>
</organism>
<reference key="1">
    <citation type="journal article" date="2011" name="J. Bacteriol.">
        <title>Comparative genomics of 28 Salmonella enterica isolates: evidence for CRISPR-mediated adaptive sublineage evolution.</title>
        <authorList>
            <person name="Fricke W.F."/>
            <person name="Mammel M.K."/>
            <person name="McDermott P.F."/>
            <person name="Tartera C."/>
            <person name="White D.G."/>
            <person name="Leclerc J.E."/>
            <person name="Ravel J."/>
            <person name="Cebula T.A."/>
        </authorList>
    </citation>
    <scope>NUCLEOTIDE SEQUENCE [LARGE SCALE GENOMIC DNA]</scope>
    <source>
        <strain>CVM19633</strain>
    </source>
</reference>
<evidence type="ECO:0000255" key="1">
    <source>
        <dbReference type="HAMAP-Rule" id="MF_00517"/>
    </source>
</evidence>
<accession>B4TVJ2</accession>
<dbReference type="EMBL" id="CP001127">
    <property type="protein sequence ID" value="ACF88863.1"/>
    <property type="molecule type" value="Genomic_DNA"/>
</dbReference>
<dbReference type="RefSeq" id="WP_000154613.1">
    <property type="nucleotide sequence ID" value="NC_011094.1"/>
</dbReference>
<dbReference type="SMR" id="B4TVJ2"/>
<dbReference type="KEGG" id="sew:SeSA_A1627"/>
<dbReference type="HOGENOM" id="CLU_001265_61_2_6"/>
<dbReference type="Proteomes" id="UP000001865">
    <property type="component" value="Chromosome"/>
</dbReference>
<dbReference type="GO" id="GO:0005886">
    <property type="term" value="C:plasma membrane"/>
    <property type="evidence" value="ECO:0007669"/>
    <property type="project" value="UniProtKB-SubCell"/>
</dbReference>
<dbReference type="GO" id="GO:0015144">
    <property type="term" value="F:carbohydrate transmembrane transporter activity"/>
    <property type="evidence" value="ECO:0007669"/>
    <property type="project" value="UniProtKB-UniRule"/>
</dbReference>
<dbReference type="CDD" id="cd17324">
    <property type="entry name" value="MFS_NepI_like"/>
    <property type="match status" value="1"/>
</dbReference>
<dbReference type="Gene3D" id="1.20.1250.20">
    <property type="entry name" value="MFS general substrate transporter like domains"/>
    <property type="match status" value="1"/>
</dbReference>
<dbReference type="HAMAP" id="MF_00517">
    <property type="entry name" value="MFS_SotB"/>
    <property type="match status" value="1"/>
</dbReference>
<dbReference type="InterPro" id="IPR011701">
    <property type="entry name" value="MFS"/>
</dbReference>
<dbReference type="InterPro" id="IPR020846">
    <property type="entry name" value="MFS_dom"/>
</dbReference>
<dbReference type="InterPro" id="IPR050189">
    <property type="entry name" value="MFS_Efflux_Transporters"/>
</dbReference>
<dbReference type="InterPro" id="IPR036259">
    <property type="entry name" value="MFS_trans_sf"/>
</dbReference>
<dbReference type="InterPro" id="IPR023495">
    <property type="entry name" value="Sugar_effux_transptr_put"/>
</dbReference>
<dbReference type="NCBIfam" id="NF002921">
    <property type="entry name" value="PRK03545.1"/>
    <property type="match status" value="1"/>
</dbReference>
<dbReference type="PANTHER" id="PTHR43124">
    <property type="entry name" value="PURINE EFFLUX PUMP PBUE"/>
    <property type="match status" value="1"/>
</dbReference>
<dbReference type="PANTHER" id="PTHR43124:SF4">
    <property type="entry name" value="SUGAR EFFLUX TRANSPORTER"/>
    <property type="match status" value="1"/>
</dbReference>
<dbReference type="Pfam" id="PF07690">
    <property type="entry name" value="MFS_1"/>
    <property type="match status" value="1"/>
</dbReference>
<dbReference type="SUPFAM" id="SSF103473">
    <property type="entry name" value="MFS general substrate transporter"/>
    <property type="match status" value="1"/>
</dbReference>
<dbReference type="PROSITE" id="PS50850">
    <property type="entry name" value="MFS"/>
    <property type="match status" value="1"/>
</dbReference>